<keyword id="KW-0051">Antiviral defense</keyword>
<keyword id="KW-0202">Cytokine</keyword>
<keyword id="KW-0903">Direct protein sequencing</keyword>
<keyword id="KW-1015">Disulfide bond</keyword>
<keyword id="KW-1267">Proteomics identification</keyword>
<keyword id="KW-1185">Reference proteome</keyword>
<keyword id="KW-0964">Secreted</keyword>
<keyword id="KW-0732">Signal</keyword>
<protein>
    <recommendedName>
        <fullName>Interferon alpha-5</fullName>
        <shortName>IFN-alpha-5</shortName>
    </recommendedName>
    <alternativeName>
        <fullName>Interferon alpha-61</fullName>
    </alternativeName>
    <alternativeName>
        <fullName>Interferon alpha-G</fullName>
        <shortName>LeIF G</shortName>
    </alternativeName>
</protein>
<name>IFNA5_HUMAN</name>
<comment type="function">
    <text>Produced by macrophages, IFN-alpha have antiviral activities. Interferon stimulates the production of two enzymes: a protein kinase and an oligoadenylate synthetase.</text>
</comment>
<comment type="subcellular location">
    <subcellularLocation>
        <location>Secreted</location>
    </subcellularLocation>
</comment>
<comment type="similarity">
    <text evidence="3">Belongs to the alpha/beta interferon family.</text>
</comment>
<organism>
    <name type="scientific">Homo sapiens</name>
    <name type="common">Human</name>
    <dbReference type="NCBI Taxonomy" id="9606"/>
    <lineage>
        <taxon>Eukaryota</taxon>
        <taxon>Metazoa</taxon>
        <taxon>Chordata</taxon>
        <taxon>Craniata</taxon>
        <taxon>Vertebrata</taxon>
        <taxon>Euteleostomi</taxon>
        <taxon>Mammalia</taxon>
        <taxon>Eutheria</taxon>
        <taxon>Euarchontoglires</taxon>
        <taxon>Primates</taxon>
        <taxon>Haplorrhini</taxon>
        <taxon>Catarrhini</taxon>
        <taxon>Hominidae</taxon>
        <taxon>Homo</taxon>
    </lineage>
</organism>
<feature type="signal peptide" evidence="2">
    <location>
        <begin position="1"/>
        <end position="21"/>
    </location>
</feature>
<feature type="chain" id="PRO_0000016362" description="Interferon alpha-5">
    <location>
        <begin position="22"/>
        <end position="189"/>
    </location>
</feature>
<feature type="disulfide bond" evidence="1">
    <location>
        <begin position="24"/>
        <end position="122"/>
    </location>
</feature>
<feature type="disulfide bond" evidence="1">
    <location>
        <begin position="52"/>
        <end position="162"/>
    </location>
</feature>
<accession>P01569</accession>
<accession>Q52LX3</accession>
<proteinExistence type="evidence at protein level"/>
<gene>
    <name type="primary">IFNA5</name>
</gene>
<dbReference type="EMBL" id="X02956">
    <property type="protein sequence ID" value="CAA26702.1"/>
    <property type="molecule type" value="Genomic_DNA"/>
</dbReference>
<dbReference type="EMBL" id="AL162420">
    <property type="status" value="NOT_ANNOTATED_CDS"/>
    <property type="molecule type" value="Genomic_DNA"/>
</dbReference>
<dbReference type="EMBL" id="BC093755">
    <property type="protein sequence ID" value="AAH93755.1"/>
    <property type="molecule type" value="mRNA"/>
</dbReference>
<dbReference type="EMBL" id="BC093757">
    <property type="protein sequence ID" value="AAH93757.1"/>
    <property type="molecule type" value="mRNA"/>
</dbReference>
<dbReference type="EMBL" id="V00541">
    <property type="protein sequence ID" value="CAA23802.1"/>
    <property type="molecule type" value="mRNA"/>
</dbReference>
<dbReference type="CCDS" id="CCDS6502.1"/>
<dbReference type="PIR" id="D25843">
    <property type="entry name" value="D25843"/>
</dbReference>
<dbReference type="PIR" id="S43716">
    <property type="entry name" value="IVHUA7"/>
</dbReference>
<dbReference type="RefSeq" id="NP_002160.1">
    <property type="nucleotide sequence ID" value="NM_002169.3"/>
</dbReference>
<dbReference type="SMR" id="P01569"/>
<dbReference type="BioGRID" id="109665">
    <property type="interactions" value="22"/>
</dbReference>
<dbReference type="ComplexPortal" id="CPX-5999">
    <property type="entry name" value="Interferon alpha receptor-ligand complex, IFNA5 variant"/>
</dbReference>
<dbReference type="DIP" id="DIP-6019N"/>
<dbReference type="FunCoup" id="P01569">
    <property type="interactions" value="955"/>
</dbReference>
<dbReference type="IntAct" id="P01569">
    <property type="interactions" value="15"/>
</dbReference>
<dbReference type="STRING" id="9606.ENSP00000484479"/>
<dbReference type="ChEMBL" id="CHEMBL3856161"/>
<dbReference type="iPTMnet" id="P01569"/>
<dbReference type="PhosphoSitePlus" id="P01569"/>
<dbReference type="BioMuta" id="IFNA5"/>
<dbReference type="DMDM" id="124457"/>
<dbReference type="MassIVE" id="P01569"/>
<dbReference type="PaxDb" id="9606-ENSP00000484479"/>
<dbReference type="PeptideAtlas" id="P01569"/>
<dbReference type="ProteomicsDB" id="51385"/>
<dbReference type="ABCD" id="P01569">
    <property type="antibodies" value="4 sequenced antibodies"/>
</dbReference>
<dbReference type="Antibodypedia" id="24866">
    <property type="antibodies" value="246 antibodies from 23 providers"/>
</dbReference>
<dbReference type="DNASU" id="3442"/>
<dbReference type="Ensembl" id="ENST00000610521.2">
    <property type="protein sequence ID" value="ENSP00000484479.1"/>
    <property type="gene ID" value="ENSG00000147873.6"/>
</dbReference>
<dbReference type="GeneID" id="3442"/>
<dbReference type="KEGG" id="hsa:3442"/>
<dbReference type="MANE-Select" id="ENST00000610521.2">
    <property type="protein sequence ID" value="ENSP00000484479.1"/>
    <property type="RefSeq nucleotide sequence ID" value="NM_002169.3"/>
    <property type="RefSeq protein sequence ID" value="NP_002160.1"/>
</dbReference>
<dbReference type="UCSC" id="uc011lnh.3">
    <property type="organism name" value="human"/>
</dbReference>
<dbReference type="AGR" id="HGNC:5426"/>
<dbReference type="CTD" id="3442"/>
<dbReference type="DisGeNET" id="3442"/>
<dbReference type="GeneCards" id="IFNA5"/>
<dbReference type="HGNC" id="HGNC:5426">
    <property type="gene designation" value="IFNA5"/>
</dbReference>
<dbReference type="HPA" id="ENSG00000147873">
    <property type="expression patterns" value="Not detected"/>
</dbReference>
<dbReference type="MIM" id="147565">
    <property type="type" value="gene"/>
</dbReference>
<dbReference type="neXtProt" id="NX_P01569"/>
<dbReference type="OpenTargets" id="ENSG00000147873"/>
<dbReference type="PharmGKB" id="PA29665"/>
<dbReference type="VEuPathDB" id="HostDB:ENSG00000147873"/>
<dbReference type="eggNOG" id="ENOG502SQAC">
    <property type="taxonomic scope" value="Eukaryota"/>
</dbReference>
<dbReference type="GeneTree" id="ENSGT01000000214430"/>
<dbReference type="HOGENOM" id="CLU_109427_0_0_1"/>
<dbReference type="InParanoid" id="P01569"/>
<dbReference type="OMA" id="MIMAQMG"/>
<dbReference type="OrthoDB" id="9824656at2759"/>
<dbReference type="PAN-GO" id="P01569">
    <property type="GO annotations" value="12 GO annotations based on evolutionary models"/>
</dbReference>
<dbReference type="PhylomeDB" id="P01569"/>
<dbReference type="TreeFam" id="TF336177"/>
<dbReference type="PathwayCommons" id="P01569"/>
<dbReference type="Reactome" id="R-HSA-909733">
    <property type="pathway name" value="Interferon alpha/beta signaling"/>
</dbReference>
<dbReference type="Reactome" id="R-HSA-912694">
    <property type="pathway name" value="Regulation of IFNA/IFNB signaling"/>
</dbReference>
<dbReference type="Reactome" id="R-HSA-933541">
    <property type="pathway name" value="TRAF6 mediated IRF7 activation"/>
</dbReference>
<dbReference type="Reactome" id="R-HSA-9705671">
    <property type="pathway name" value="SARS-CoV-2 activates/modulates innate and adaptive immune responses"/>
</dbReference>
<dbReference type="Reactome" id="R-HSA-983231">
    <property type="pathway name" value="Factors involved in megakaryocyte development and platelet production"/>
</dbReference>
<dbReference type="Reactome" id="R-HSA-9833109">
    <property type="pathway name" value="Evasion by RSV of host interferon responses"/>
</dbReference>
<dbReference type="SignaLink" id="P01569"/>
<dbReference type="BioGRID-ORCS" id="3442">
    <property type="hits" value="42 hits in 1070 CRISPR screens"/>
</dbReference>
<dbReference type="GeneWiki" id="IFNA5"/>
<dbReference type="GenomeRNAi" id="3442"/>
<dbReference type="Pharos" id="P01569">
    <property type="development level" value="Tbio"/>
</dbReference>
<dbReference type="PRO" id="PR:P01569"/>
<dbReference type="Proteomes" id="UP000005640">
    <property type="component" value="Chromosome 9"/>
</dbReference>
<dbReference type="RNAct" id="P01569">
    <property type="molecule type" value="protein"/>
</dbReference>
<dbReference type="Bgee" id="ENSG00000147873">
    <property type="expression patterns" value="Expressed in ileal mucosa and 22 other cell types or tissues"/>
</dbReference>
<dbReference type="GO" id="GO:0005576">
    <property type="term" value="C:extracellular region"/>
    <property type="evidence" value="ECO:0000304"/>
    <property type="project" value="Reactome"/>
</dbReference>
<dbReference type="GO" id="GO:0005615">
    <property type="term" value="C:extracellular space"/>
    <property type="evidence" value="ECO:0000318"/>
    <property type="project" value="GO_Central"/>
</dbReference>
<dbReference type="GO" id="GO:0005125">
    <property type="term" value="F:cytokine activity"/>
    <property type="evidence" value="ECO:0000318"/>
    <property type="project" value="GO_Central"/>
</dbReference>
<dbReference type="GO" id="GO:0005126">
    <property type="term" value="F:cytokine receptor binding"/>
    <property type="evidence" value="ECO:0000304"/>
    <property type="project" value="ProtInc"/>
</dbReference>
<dbReference type="GO" id="GO:0005132">
    <property type="term" value="F:type I interferon receptor binding"/>
    <property type="evidence" value="ECO:0000318"/>
    <property type="project" value="GO_Central"/>
</dbReference>
<dbReference type="GO" id="GO:0002250">
    <property type="term" value="P:adaptive immune response"/>
    <property type="evidence" value="ECO:0000318"/>
    <property type="project" value="GO_Central"/>
</dbReference>
<dbReference type="GO" id="GO:0002312">
    <property type="term" value="P:B cell activation involved in immune response"/>
    <property type="evidence" value="ECO:0000318"/>
    <property type="project" value="GO_Central"/>
</dbReference>
<dbReference type="GO" id="GO:0098586">
    <property type="term" value="P:cellular response to virus"/>
    <property type="evidence" value="ECO:0000303"/>
    <property type="project" value="ComplexPortal"/>
</dbReference>
<dbReference type="GO" id="GO:0051607">
    <property type="term" value="P:defense response to virus"/>
    <property type="evidence" value="ECO:0007669"/>
    <property type="project" value="UniProtKB-KW"/>
</dbReference>
<dbReference type="GO" id="GO:0006959">
    <property type="term" value="P:humoral immune response"/>
    <property type="evidence" value="ECO:0000318"/>
    <property type="project" value="GO_Central"/>
</dbReference>
<dbReference type="GO" id="GO:0002323">
    <property type="term" value="P:natural killer cell activation involved in immune response"/>
    <property type="evidence" value="ECO:0000318"/>
    <property type="project" value="GO_Central"/>
</dbReference>
<dbReference type="GO" id="GO:0043330">
    <property type="term" value="P:response to exogenous dsRNA"/>
    <property type="evidence" value="ECO:0000318"/>
    <property type="project" value="GO_Central"/>
</dbReference>
<dbReference type="GO" id="GO:0002286">
    <property type="term" value="P:T cell activation involved in immune response"/>
    <property type="evidence" value="ECO:0000318"/>
    <property type="project" value="GO_Central"/>
</dbReference>
<dbReference type="GO" id="GO:0060337">
    <property type="term" value="P:type I interferon-mediated signaling pathway"/>
    <property type="evidence" value="ECO:0000318"/>
    <property type="project" value="GO_Central"/>
</dbReference>
<dbReference type="CDD" id="cd00095">
    <property type="entry name" value="IFab"/>
    <property type="match status" value="1"/>
</dbReference>
<dbReference type="FunFam" id="1.20.1250.10:FF:000001">
    <property type="entry name" value="Interferon alpha"/>
    <property type="match status" value="1"/>
</dbReference>
<dbReference type="Gene3D" id="1.20.1250.10">
    <property type="match status" value="1"/>
</dbReference>
<dbReference type="InterPro" id="IPR009079">
    <property type="entry name" value="4_helix_cytokine-like_core"/>
</dbReference>
<dbReference type="InterPro" id="IPR000471">
    <property type="entry name" value="Interferon_alpha/beta/delta"/>
</dbReference>
<dbReference type="PANTHER" id="PTHR11691:SF60">
    <property type="entry name" value="INTERFERON ALPHA-5"/>
    <property type="match status" value="1"/>
</dbReference>
<dbReference type="PANTHER" id="PTHR11691">
    <property type="entry name" value="TYPE I INTERFERON"/>
    <property type="match status" value="1"/>
</dbReference>
<dbReference type="Pfam" id="PF00143">
    <property type="entry name" value="Interferon"/>
    <property type="match status" value="1"/>
</dbReference>
<dbReference type="PRINTS" id="PR00266">
    <property type="entry name" value="INTERFERONAB"/>
</dbReference>
<dbReference type="SMART" id="SM00076">
    <property type="entry name" value="IFabd"/>
    <property type="match status" value="1"/>
</dbReference>
<dbReference type="SUPFAM" id="SSF47266">
    <property type="entry name" value="4-helical cytokines"/>
    <property type="match status" value="1"/>
</dbReference>
<dbReference type="PROSITE" id="PS00252">
    <property type="entry name" value="INTERFERON_A_B_D"/>
    <property type="match status" value="1"/>
</dbReference>
<reference key="1">
    <citation type="journal article" date="1985" name="J. Mol. Biol.">
        <title>Structural relationship of human interferon alpha genes and pseudogenes.</title>
        <authorList>
            <person name="Henco K."/>
            <person name="Brosius J."/>
            <person name="Fujisawa A."/>
            <person name="Fujisawa J."/>
            <person name="Haynes J.R."/>
            <person name="Hochstadt J."/>
            <person name="Kovacic T."/>
            <person name="Pasek M."/>
            <person name="Schamboeck A."/>
            <person name="Schmid J."/>
            <person name="Todokoro K."/>
            <person name="Waelchli M."/>
            <person name="Nagata S."/>
            <person name="Weissmann C."/>
        </authorList>
    </citation>
    <scope>NUCLEOTIDE SEQUENCE [GENOMIC DNA]</scope>
</reference>
<reference key="2">
    <citation type="journal article" date="2004" name="Nature">
        <title>DNA sequence and analysis of human chromosome 9.</title>
        <authorList>
            <person name="Humphray S.J."/>
            <person name="Oliver K."/>
            <person name="Hunt A.R."/>
            <person name="Plumb R.W."/>
            <person name="Loveland J.E."/>
            <person name="Howe K.L."/>
            <person name="Andrews T.D."/>
            <person name="Searle S."/>
            <person name="Hunt S.E."/>
            <person name="Scott C.E."/>
            <person name="Jones M.C."/>
            <person name="Ainscough R."/>
            <person name="Almeida J.P."/>
            <person name="Ambrose K.D."/>
            <person name="Ashwell R.I.S."/>
            <person name="Babbage A.K."/>
            <person name="Babbage S."/>
            <person name="Bagguley C.L."/>
            <person name="Bailey J."/>
            <person name="Banerjee R."/>
            <person name="Barker D.J."/>
            <person name="Barlow K.F."/>
            <person name="Bates K."/>
            <person name="Beasley H."/>
            <person name="Beasley O."/>
            <person name="Bird C.P."/>
            <person name="Bray-Allen S."/>
            <person name="Brown A.J."/>
            <person name="Brown J.Y."/>
            <person name="Burford D."/>
            <person name="Burrill W."/>
            <person name="Burton J."/>
            <person name="Carder C."/>
            <person name="Carter N.P."/>
            <person name="Chapman J.C."/>
            <person name="Chen Y."/>
            <person name="Clarke G."/>
            <person name="Clark S.Y."/>
            <person name="Clee C.M."/>
            <person name="Clegg S."/>
            <person name="Collier R.E."/>
            <person name="Corby N."/>
            <person name="Crosier M."/>
            <person name="Cummings A.T."/>
            <person name="Davies J."/>
            <person name="Dhami P."/>
            <person name="Dunn M."/>
            <person name="Dutta I."/>
            <person name="Dyer L.W."/>
            <person name="Earthrowl M.E."/>
            <person name="Faulkner L."/>
            <person name="Fleming C.J."/>
            <person name="Frankish A."/>
            <person name="Frankland J.A."/>
            <person name="French L."/>
            <person name="Fricker D.G."/>
            <person name="Garner P."/>
            <person name="Garnett J."/>
            <person name="Ghori J."/>
            <person name="Gilbert J.G.R."/>
            <person name="Glison C."/>
            <person name="Grafham D.V."/>
            <person name="Gribble S."/>
            <person name="Griffiths C."/>
            <person name="Griffiths-Jones S."/>
            <person name="Grocock R."/>
            <person name="Guy J."/>
            <person name="Hall R.E."/>
            <person name="Hammond S."/>
            <person name="Harley J.L."/>
            <person name="Harrison E.S.I."/>
            <person name="Hart E.A."/>
            <person name="Heath P.D."/>
            <person name="Henderson C.D."/>
            <person name="Hopkins B.L."/>
            <person name="Howard P.J."/>
            <person name="Howden P.J."/>
            <person name="Huckle E."/>
            <person name="Johnson C."/>
            <person name="Johnson D."/>
            <person name="Joy A.A."/>
            <person name="Kay M."/>
            <person name="Keenan S."/>
            <person name="Kershaw J.K."/>
            <person name="Kimberley A.M."/>
            <person name="King A."/>
            <person name="Knights A."/>
            <person name="Laird G.K."/>
            <person name="Langford C."/>
            <person name="Lawlor S."/>
            <person name="Leongamornlert D.A."/>
            <person name="Leversha M."/>
            <person name="Lloyd C."/>
            <person name="Lloyd D.M."/>
            <person name="Lovell J."/>
            <person name="Martin S."/>
            <person name="Mashreghi-Mohammadi M."/>
            <person name="Matthews L."/>
            <person name="McLaren S."/>
            <person name="McLay K.E."/>
            <person name="McMurray A."/>
            <person name="Milne S."/>
            <person name="Nickerson T."/>
            <person name="Nisbett J."/>
            <person name="Nordsiek G."/>
            <person name="Pearce A.V."/>
            <person name="Peck A.I."/>
            <person name="Porter K.M."/>
            <person name="Pandian R."/>
            <person name="Pelan S."/>
            <person name="Phillimore B."/>
            <person name="Povey S."/>
            <person name="Ramsey Y."/>
            <person name="Rand V."/>
            <person name="Scharfe M."/>
            <person name="Sehra H.K."/>
            <person name="Shownkeen R."/>
            <person name="Sims S.K."/>
            <person name="Skuce C.D."/>
            <person name="Smith M."/>
            <person name="Steward C.A."/>
            <person name="Swarbreck D."/>
            <person name="Sycamore N."/>
            <person name="Tester J."/>
            <person name="Thorpe A."/>
            <person name="Tracey A."/>
            <person name="Tromans A."/>
            <person name="Thomas D.W."/>
            <person name="Wall M."/>
            <person name="Wallis J.M."/>
            <person name="West A.P."/>
            <person name="Whitehead S.L."/>
            <person name="Willey D.L."/>
            <person name="Williams S.A."/>
            <person name="Wilming L."/>
            <person name="Wray P.W."/>
            <person name="Young L."/>
            <person name="Ashurst J.L."/>
            <person name="Coulson A."/>
            <person name="Blocker H."/>
            <person name="Durbin R.M."/>
            <person name="Sulston J.E."/>
            <person name="Hubbard T."/>
            <person name="Jackson M.J."/>
            <person name="Bentley D.R."/>
            <person name="Beck S."/>
            <person name="Rogers J."/>
            <person name="Dunham I."/>
        </authorList>
    </citation>
    <scope>NUCLEOTIDE SEQUENCE [LARGE SCALE GENOMIC DNA]</scope>
</reference>
<reference key="3">
    <citation type="journal article" date="2004" name="Genome Res.">
        <title>The status, quality, and expansion of the NIH full-length cDNA project: the Mammalian Gene Collection (MGC).</title>
        <authorList>
            <consortium name="The MGC Project Team"/>
        </authorList>
    </citation>
    <scope>NUCLEOTIDE SEQUENCE [LARGE SCALE MRNA]</scope>
    <source>
        <tissue>Brain</tissue>
    </source>
</reference>
<reference key="4">
    <citation type="journal article" date="1981" name="Nature">
        <title>The structure of eight distinct cloned human leukocyte interferon cDNAs.</title>
        <authorList>
            <person name="Goeddel D.V."/>
            <person name="Leung D.W."/>
            <person name="Dull T.J."/>
            <person name="Gross M."/>
            <person name="Lawn R.M."/>
            <person name="McCandliss R."/>
            <person name="Seeburg P.H."/>
            <person name="Ullrich A."/>
            <person name="Yelverton E."/>
            <person name="Gray P.W."/>
        </authorList>
    </citation>
    <scope>NUCLEOTIDE SEQUENCE [MRNA] OF 57-189</scope>
    <source>
        <tissue>Spleen</tissue>
    </source>
</reference>
<reference key="5">
    <citation type="journal article" date="2004" name="Protein Sci.">
        <title>Signal peptide prediction based on analysis of experimentally verified cleavage sites.</title>
        <authorList>
            <person name="Zhang Z."/>
            <person name="Henzel W.J."/>
        </authorList>
    </citation>
    <scope>PROTEIN SEQUENCE OF 22-36</scope>
</reference>
<evidence type="ECO:0000250" key="1"/>
<evidence type="ECO:0000269" key="2">
    <source>
    </source>
</evidence>
<evidence type="ECO:0000305" key="3"/>
<sequence length="189" mass="21942">MALPFVLLMALVVLNCKSICSLGCDLPQTHSLSNRRTLMIMAQMGRISPFSCLKDRHDFGFPQEEFDGNQFQKAQAISVLHEMIQQTFNLFSTKDSSATWDETLLDKFYTELYQQLNDLEACMMQEVGVEDTPLMNVDSILTVRKYFQRITLYLTEKKYSPCAWEVVRAEIMRSFSLSANLQERLRRKE</sequence>